<comment type="domain">
    <text>Lacks the C2H3-type zinc-finger found in all members of this family.</text>
</comment>
<comment type="similarity">
    <text evidence="1">Belongs to the ros/MucR family.</text>
</comment>
<comment type="sequence caution" evidence="1">
    <conflict type="erroneous initiation">
        <sequence resource="EMBL-CDS" id="AAK65596"/>
    </conflict>
</comment>
<geneLocation type="plasmid">
    <name>pSymA</name>
    <name>megaplasmid 1</name>
</geneLocation>
<reference key="1">
    <citation type="journal article" date="1997" name="Mol. Plant Microbe Interact.">
        <title>Identification and characterization of a gene on Rhizobium meliloti pSyma, syrB, that negatively affects syrM expression.</title>
        <authorList>
            <person name="Barnett M.J."/>
            <person name="Long S.R."/>
        </authorList>
    </citation>
    <scope>NUCLEOTIDE SEQUENCE [GENOMIC DNA]</scope>
    <source>
        <strain>1021</strain>
    </source>
</reference>
<reference key="2">
    <citation type="journal article" date="2001" name="Proc. Natl. Acad. Sci. U.S.A.">
        <title>Nucleotide sequence and predicted functions of the entire Sinorhizobium meliloti pSymA megaplasmid.</title>
        <authorList>
            <person name="Barnett M.J."/>
            <person name="Fisher R.F."/>
            <person name="Jones T."/>
            <person name="Komp C."/>
            <person name="Abola A.P."/>
            <person name="Barloy-Hubler F."/>
            <person name="Bowser L."/>
            <person name="Capela D."/>
            <person name="Galibert F."/>
            <person name="Gouzy J."/>
            <person name="Gurjal M."/>
            <person name="Hong A."/>
            <person name="Huizar L."/>
            <person name="Hyman R.W."/>
            <person name="Kahn D."/>
            <person name="Kahn M.L."/>
            <person name="Kalman S."/>
            <person name="Keating D.H."/>
            <person name="Palm C."/>
            <person name="Peck M.C."/>
            <person name="Surzycki R."/>
            <person name="Wells D.H."/>
            <person name="Yeh K.-C."/>
            <person name="Davis R.W."/>
            <person name="Federspiel N.A."/>
            <person name="Long S.R."/>
        </authorList>
    </citation>
    <scope>NUCLEOTIDE SEQUENCE [LARGE SCALE GENOMIC DNA]</scope>
    <source>
        <strain>1021</strain>
    </source>
</reference>
<reference key="3">
    <citation type="journal article" date="2001" name="Science">
        <title>The composite genome of the legume symbiont Sinorhizobium meliloti.</title>
        <authorList>
            <person name="Galibert F."/>
            <person name="Finan T.M."/>
            <person name="Long S.R."/>
            <person name="Puehler A."/>
            <person name="Abola P."/>
            <person name="Ampe F."/>
            <person name="Barloy-Hubler F."/>
            <person name="Barnett M.J."/>
            <person name="Becker A."/>
            <person name="Boistard P."/>
            <person name="Bothe G."/>
            <person name="Boutry M."/>
            <person name="Bowser L."/>
            <person name="Buhrmester J."/>
            <person name="Cadieu E."/>
            <person name="Capela D."/>
            <person name="Chain P."/>
            <person name="Cowie A."/>
            <person name="Davis R.W."/>
            <person name="Dreano S."/>
            <person name="Federspiel N.A."/>
            <person name="Fisher R.F."/>
            <person name="Gloux S."/>
            <person name="Godrie T."/>
            <person name="Goffeau A."/>
            <person name="Golding B."/>
            <person name="Gouzy J."/>
            <person name="Gurjal M."/>
            <person name="Hernandez-Lucas I."/>
            <person name="Hong A."/>
            <person name="Huizar L."/>
            <person name="Hyman R.W."/>
            <person name="Jones T."/>
            <person name="Kahn D."/>
            <person name="Kahn M.L."/>
            <person name="Kalman S."/>
            <person name="Keating D.H."/>
            <person name="Kiss E."/>
            <person name="Komp C."/>
            <person name="Lelaure V."/>
            <person name="Masuy D."/>
            <person name="Palm C."/>
            <person name="Peck M.C."/>
            <person name="Pohl T.M."/>
            <person name="Portetelle D."/>
            <person name="Purnelle B."/>
            <person name="Ramsperger U."/>
            <person name="Surzycki R."/>
            <person name="Thebault P."/>
            <person name="Vandenbol M."/>
            <person name="Vorhoelter F.J."/>
            <person name="Weidner S."/>
            <person name="Wells D.H."/>
            <person name="Wong K."/>
            <person name="Yeh K.-C."/>
            <person name="Batut J."/>
        </authorList>
    </citation>
    <scope>NUCLEOTIDE SEQUENCE [LARGE SCALE GENOMIC DNA]</scope>
    <source>
        <strain>1021</strain>
    </source>
</reference>
<protein>
    <recommendedName>
        <fullName>Putative MucR family transcriptional regulatory protein RA0938</fullName>
    </recommendedName>
</protein>
<name>Y4338_RHIME</name>
<accession>O33682</accession>
<keyword id="KW-0238">DNA-binding</keyword>
<keyword id="KW-0614">Plasmid</keyword>
<keyword id="KW-1185">Reference proteome</keyword>
<keyword id="KW-0804">Transcription</keyword>
<keyword id="KW-0805">Transcription regulation</keyword>
<evidence type="ECO:0000305" key="1"/>
<proteinExistence type="inferred from homology"/>
<feature type="chain" id="PRO_0000168175" description="Putative MucR family transcriptional regulatory protein RA0938">
    <location>
        <begin position="1"/>
        <end position="163"/>
    </location>
</feature>
<dbReference type="EMBL" id="U90220">
    <property type="protein sequence ID" value="AAB63671.1"/>
    <property type="molecule type" value="Genomic_DNA"/>
</dbReference>
<dbReference type="EMBL" id="AE006469">
    <property type="protein sequence ID" value="AAK65596.1"/>
    <property type="status" value="ALT_INIT"/>
    <property type="molecule type" value="Genomic_DNA"/>
</dbReference>
<dbReference type="PIR" id="B95379">
    <property type="entry name" value="B95379"/>
</dbReference>
<dbReference type="RefSeq" id="NP_436184.1">
    <property type="nucleotide sequence ID" value="NC_003037.1"/>
</dbReference>
<dbReference type="SMR" id="O33682"/>
<dbReference type="EnsemblBacteria" id="AAK65596">
    <property type="protein sequence ID" value="AAK65596"/>
    <property type="gene ID" value="SMa1705"/>
</dbReference>
<dbReference type="KEGG" id="sme:SMa1705"/>
<dbReference type="PATRIC" id="fig|266834.11.peg.968"/>
<dbReference type="HOGENOM" id="CLU_106247_2_1_5"/>
<dbReference type="OrthoDB" id="9809693at2"/>
<dbReference type="Proteomes" id="UP000001976">
    <property type="component" value="Plasmid pSymA"/>
</dbReference>
<dbReference type="GO" id="GO:0003677">
    <property type="term" value="F:DNA binding"/>
    <property type="evidence" value="ECO:0007669"/>
    <property type="project" value="UniProtKB-KW"/>
</dbReference>
<dbReference type="GO" id="GO:0008270">
    <property type="term" value="F:zinc ion binding"/>
    <property type="evidence" value="ECO:0007669"/>
    <property type="project" value="InterPro"/>
</dbReference>
<dbReference type="GO" id="GO:0006355">
    <property type="term" value="P:regulation of DNA-templated transcription"/>
    <property type="evidence" value="ECO:0007669"/>
    <property type="project" value="InterPro"/>
</dbReference>
<dbReference type="Gene3D" id="1.10.10.1550">
    <property type="entry name" value="ROS/MUCR transcriptional regulator protein"/>
    <property type="match status" value="1"/>
</dbReference>
<dbReference type="InterPro" id="IPR041920">
    <property type="entry name" value="ROS/MUCR_sf"/>
</dbReference>
<dbReference type="InterPro" id="IPR008807">
    <property type="entry name" value="ROS_MUCR"/>
</dbReference>
<dbReference type="Pfam" id="PF05443">
    <property type="entry name" value="ROS_MUCR"/>
    <property type="match status" value="1"/>
</dbReference>
<gene>
    <name type="ordered locus">RA0938</name>
    <name type="ORF">SMa1705</name>
</gene>
<organism>
    <name type="scientific">Rhizobium meliloti (strain 1021)</name>
    <name type="common">Ensifer meliloti</name>
    <name type="synonym">Sinorhizobium meliloti</name>
    <dbReference type="NCBI Taxonomy" id="266834"/>
    <lineage>
        <taxon>Bacteria</taxon>
        <taxon>Pseudomonadati</taxon>
        <taxon>Pseudomonadota</taxon>
        <taxon>Alphaproteobacteria</taxon>
        <taxon>Hyphomicrobiales</taxon>
        <taxon>Rhizobiaceae</taxon>
        <taxon>Sinorhizobium/Ensifer group</taxon>
        <taxon>Sinorhizobium</taxon>
    </lineage>
</organism>
<sequence length="163" mass="18633">MPSFRPKYLHSASLDFIGNRLRRRSLTETRSNGRRLELTSRIVSAYLSRNVIAPDELPYLIQQTYGSLNETSGPGETPPAVEEQRPAVPIKKSVTDDFIVCLEDGKKFKSLKRHLTTKYGMTPDQYREKWKLPSEYPMTARNYALQRSKLARAMGLGKSRALK</sequence>